<accession>O46252</accession>
<accession>O46253</accession>
<dbReference type="EMBL" id="U93016">
    <property type="protein sequence ID" value="AAC03264.1"/>
    <property type="molecule type" value="Genomic_DNA"/>
</dbReference>
<dbReference type="EMBL" id="U93017">
    <property type="protein sequence ID" value="AAC03265.1"/>
    <property type="molecule type" value="Genomic_DNA"/>
</dbReference>
<dbReference type="GO" id="GO:0005634">
    <property type="term" value="C:nucleus"/>
    <property type="evidence" value="ECO:0007669"/>
    <property type="project" value="UniProtKB-SubCell"/>
</dbReference>
<dbReference type="GO" id="GO:0003677">
    <property type="term" value="F:DNA binding"/>
    <property type="evidence" value="ECO:0007669"/>
    <property type="project" value="UniProtKB-KW"/>
</dbReference>
<dbReference type="GO" id="GO:0008270">
    <property type="term" value="F:zinc ion binding"/>
    <property type="evidence" value="ECO:0007669"/>
    <property type="project" value="UniProtKB-KW"/>
</dbReference>
<dbReference type="GO" id="GO:0035282">
    <property type="term" value="P:segmentation"/>
    <property type="evidence" value="ECO:0007669"/>
    <property type="project" value="UniProtKB-KW"/>
</dbReference>
<gene>
    <name type="primary">hb</name>
</gene>
<keyword id="KW-0217">Developmental protein</keyword>
<keyword id="KW-0238">DNA-binding</keyword>
<keyword id="KW-0302">Gap protein</keyword>
<keyword id="KW-0479">Metal-binding</keyword>
<keyword id="KW-0539">Nucleus</keyword>
<keyword id="KW-0677">Repeat</keyword>
<keyword id="KW-0862">Zinc</keyword>
<keyword id="KW-0863">Zinc-finger</keyword>
<sequence length="193" mass="21100">WYSSMFAANIKQEPISHHLHHHHAHHSHHRHDSNSNSNASSPHQSPLPSPNPPSNTNLQLEQYLKQQQQQQQLQQQQQQPMDTLCAAAMTPSPSNNDQNSLGWLSGLPNPMQTIMPANMRPSPTATTATAAAAAPTTTVAAIALQANDKLQALTPPMDVTPPKSPAKSQQSCAEPEKEHDLMSNSSEDMKYMA</sequence>
<comment type="function">
    <text evidence="1">Gap class segmentation protein that controls development of head structures.</text>
</comment>
<comment type="subcellular location">
    <subcellularLocation>
        <location evidence="1">Nucleus</location>
    </subcellularLocation>
</comment>
<comment type="similarity">
    <text evidence="3">Belongs to the hunchback C2H2-type zinc-finger protein family.</text>
</comment>
<feature type="chain" id="PRO_0000046960" description="Protein hunchback">
    <location>
        <begin position="1" status="less than"/>
        <end position="193" status="greater than"/>
    </location>
</feature>
<feature type="region of interest" description="Disordered" evidence="2">
    <location>
        <begin position="18"/>
        <end position="57"/>
    </location>
</feature>
<feature type="region of interest" description="Disordered" evidence="2">
    <location>
        <begin position="153"/>
        <end position="193"/>
    </location>
</feature>
<feature type="compositionally biased region" description="Basic residues" evidence="2">
    <location>
        <begin position="18"/>
        <end position="31"/>
    </location>
</feature>
<feature type="compositionally biased region" description="Low complexity" evidence="2">
    <location>
        <begin position="34"/>
        <end position="44"/>
    </location>
</feature>
<feature type="compositionally biased region" description="Basic and acidic residues" evidence="2">
    <location>
        <begin position="174"/>
        <end position="193"/>
    </location>
</feature>
<feature type="non-consecutive residues" evidence="3">
    <location>
        <begin position="100"/>
        <end position="101"/>
    </location>
</feature>
<feature type="non-terminal residue">
    <location>
        <position position="1"/>
    </location>
</feature>
<feature type="non-terminal residue">
    <location>
        <position position="193"/>
    </location>
</feature>
<organism>
    <name type="scientific">Drosophila petalopeza</name>
    <name type="common">Fruit fly</name>
    <dbReference type="NCBI Taxonomy" id="58309"/>
    <lineage>
        <taxon>Eukaryota</taxon>
        <taxon>Metazoa</taxon>
        <taxon>Ecdysozoa</taxon>
        <taxon>Arthropoda</taxon>
        <taxon>Hexapoda</taxon>
        <taxon>Insecta</taxon>
        <taxon>Pterygota</taxon>
        <taxon>Neoptera</taxon>
        <taxon>Endopterygota</taxon>
        <taxon>Diptera</taxon>
        <taxon>Brachycera</taxon>
        <taxon>Muscomorpha</taxon>
        <taxon>Ephydroidea</taxon>
        <taxon>Drosophilidae</taxon>
        <taxon>Drosophila</taxon>
        <taxon>Hawaiian Drosophila</taxon>
    </lineage>
</organism>
<reference key="1">
    <citation type="journal article" date="1997" name="Syst. Biol.">
        <title>Multiple sources of character information and the phylogeny of Hawaiian Drosophilids.</title>
        <authorList>
            <person name="Baker R.H."/>
            <person name="DeSalle R."/>
        </authorList>
    </citation>
    <scope>NUCLEOTIDE SEQUENCE [GENOMIC DNA]</scope>
</reference>
<proteinExistence type="inferred from homology"/>
<protein>
    <recommendedName>
        <fullName>Protein hunchback</fullName>
    </recommendedName>
</protein>
<name>HUNB_DROPO</name>
<evidence type="ECO:0000250" key="1"/>
<evidence type="ECO:0000256" key="2">
    <source>
        <dbReference type="SAM" id="MobiDB-lite"/>
    </source>
</evidence>
<evidence type="ECO:0000305" key="3"/>